<proteinExistence type="evidence at protein level"/>
<dbReference type="EC" id="2.4.1.360" evidence="3"/>
<dbReference type="EMBL" id="AB909376">
    <property type="protein sequence ID" value="BAP90361.1"/>
    <property type="molecule type" value="mRNA"/>
</dbReference>
<dbReference type="SMR" id="A0A0A1H7N4"/>
<dbReference type="KEGG" id="ag:BAP90361"/>
<dbReference type="BRENDA" id="2.4.1.360">
    <property type="organism ID" value="2227"/>
</dbReference>
<dbReference type="GO" id="GO:0120514">
    <property type="term" value="F:2-hydroxyflavanone C-glucosyltransferase activity"/>
    <property type="evidence" value="ECO:0007669"/>
    <property type="project" value="UniProtKB-EC"/>
</dbReference>
<dbReference type="GO" id="GO:0035251">
    <property type="term" value="F:UDP-glucosyltransferase activity"/>
    <property type="evidence" value="ECO:0000314"/>
    <property type="project" value="UniProtKB"/>
</dbReference>
<dbReference type="CDD" id="cd03784">
    <property type="entry name" value="GT1_Gtf-like"/>
    <property type="match status" value="1"/>
</dbReference>
<dbReference type="FunFam" id="3.40.50.2000:FF:000060">
    <property type="entry name" value="Glycosyltransferase"/>
    <property type="match status" value="1"/>
</dbReference>
<dbReference type="Gene3D" id="3.40.50.2000">
    <property type="entry name" value="Glycogen Phosphorylase B"/>
    <property type="match status" value="2"/>
</dbReference>
<dbReference type="InterPro" id="IPR050481">
    <property type="entry name" value="UDP-glycosyltransf_plant"/>
</dbReference>
<dbReference type="InterPro" id="IPR002213">
    <property type="entry name" value="UDP_glucos_trans"/>
</dbReference>
<dbReference type="InterPro" id="IPR035595">
    <property type="entry name" value="UDP_glycos_trans_CS"/>
</dbReference>
<dbReference type="PANTHER" id="PTHR48048">
    <property type="entry name" value="GLYCOSYLTRANSFERASE"/>
    <property type="match status" value="1"/>
</dbReference>
<dbReference type="PANTHER" id="PTHR48048:SF76">
    <property type="entry name" value="UDP-GLYCOSYLTRANSFERASE 708D1-LIKE"/>
    <property type="match status" value="1"/>
</dbReference>
<dbReference type="Pfam" id="PF00201">
    <property type="entry name" value="UDPGT"/>
    <property type="match status" value="1"/>
</dbReference>
<dbReference type="SUPFAM" id="SSF53756">
    <property type="entry name" value="UDP-Glycosyltransferase/glycogen phosphorylase"/>
    <property type="match status" value="1"/>
</dbReference>
<dbReference type="PROSITE" id="PS00375">
    <property type="entry name" value="UDPGT"/>
    <property type="match status" value="1"/>
</dbReference>
<sequence>MMGDLTTSFPATTLTTNEQPHVVVCSGAGMGHLIPFLNLASTLSSAPYRCKVTLLIVIPLITDAESHHISSFFSSHPTIHRLDFHVNLPAPKPNVDPFFLRYKSISDSAHRLPVHLSTLAPPISAVFSDFLFTQGLNTTLPHLPNYTFTTTSARFFTLMSYVPHLAKSSSSSPVEIPGLEPFPTDNIPPPFFNPDHIFTSFTISNANYLSLSKGIIVNTFDSFEPETLSALNSGDSLPDLPPVIPIGPLNELEHNKQEELLPWLDQQPEKSVLYVSFGNRTAMSSDQILELGMGLERSDCRFIWVVKTSKIDKDDKSELRKLFGEELYVKLSEKGKLVKWVNQTEILGHTAVGGFLSHCGWNSVMEAARRGVPILAWPQHGDQRENAWVVEKAGLGVWEREWSSGIQVAIVEKVKMIMGNNDLRNSAVRVGEEAKRACDVGGSSATALMNIIGSLKR</sequence>
<gene>
    <name evidence="4" type="primary">UGT708C2</name>
    <name evidence="4" type="synonym">CGTb</name>
</gene>
<evidence type="ECO:0000250" key="1">
    <source>
        <dbReference type="UniProtKB" id="A0A0A1HA03"/>
    </source>
</evidence>
<evidence type="ECO:0000250" key="2">
    <source>
        <dbReference type="UniProtKB" id="P51094"/>
    </source>
</evidence>
<evidence type="ECO:0000269" key="3">
    <source>
    </source>
</evidence>
<evidence type="ECO:0000303" key="4">
    <source>
    </source>
</evidence>
<evidence type="ECO:0000305" key="5"/>
<evidence type="ECO:0000312" key="6">
    <source>
        <dbReference type="EMBL" id="BAP90361.1"/>
    </source>
</evidence>
<accession>A0A0A1H7N4</accession>
<protein>
    <recommendedName>
        <fullName evidence="4">UDP-glycosyltransferase 708C2</fullName>
        <ecNumber evidence="3">2.4.1.360</ecNumber>
    </recommendedName>
    <alternativeName>
        <fullName evidence="4">C-glucosyltransferase b</fullName>
        <shortName evidence="4">FeCGTb</shortName>
    </alternativeName>
    <alternativeName>
        <fullName evidence="5">UDP-glucose:2-hydroxyflavanone C-glucosyltransferase</fullName>
    </alternativeName>
</protein>
<keyword id="KW-0903">Direct protein sequencing</keyword>
<keyword id="KW-0328">Glycosyltransferase</keyword>
<keyword id="KW-0808">Transferase</keyword>
<feature type="chain" id="PRO_0000436255" description="UDP-glycosyltransferase 708C2">
    <location>
        <begin position="1"/>
        <end position="457"/>
    </location>
</feature>
<feature type="region of interest" description="UDP" evidence="1">
    <location>
        <begin position="279"/>
        <end position="280"/>
    </location>
</feature>
<feature type="active site" description="Proton acceptor" evidence="1">
    <location>
        <position position="32"/>
    </location>
</feature>
<feature type="active site" description="Charge relay" evidence="1">
    <location>
        <position position="129"/>
    </location>
</feature>
<feature type="binding site" evidence="2">
    <location>
        <position position="32"/>
    </location>
    <ligand>
        <name>an anthocyanidin</name>
        <dbReference type="ChEBI" id="CHEBI:143576"/>
    </ligand>
</feature>
<feature type="binding site" evidence="1">
    <location>
        <position position="150"/>
    </location>
    <ligand>
        <name>UDP-alpha-D-glucose</name>
        <dbReference type="ChEBI" id="CHEBI:58885"/>
    </ligand>
</feature>
<feature type="binding site" evidence="1">
    <location>
        <position position="341"/>
    </location>
    <ligand>
        <name>UDP-alpha-D-glucose</name>
        <dbReference type="ChEBI" id="CHEBI:58885"/>
    </ligand>
</feature>
<feature type="binding site" evidence="1">
    <location>
        <position position="343"/>
    </location>
    <ligand>
        <name>UDP-alpha-D-glucose</name>
        <dbReference type="ChEBI" id="CHEBI:58885"/>
    </ligand>
</feature>
<feature type="binding site" evidence="1">
    <location>
        <position position="358"/>
    </location>
    <ligand>
        <name>UDP-alpha-D-glucose</name>
        <dbReference type="ChEBI" id="CHEBI:58885"/>
    </ligand>
</feature>
<feature type="binding site" evidence="1">
    <location>
        <position position="361"/>
    </location>
    <ligand>
        <name>UDP-alpha-D-glucose</name>
        <dbReference type="ChEBI" id="CHEBI:58885"/>
    </ligand>
</feature>
<feature type="binding site" evidence="1">
    <location>
        <position position="362"/>
    </location>
    <ligand>
        <name>UDP-alpha-D-glucose</name>
        <dbReference type="ChEBI" id="CHEBI:58885"/>
    </ligand>
</feature>
<feature type="binding site" evidence="1">
    <location>
        <position position="363"/>
    </location>
    <ligand>
        <name>UDP-alpha-D-glucose</name>
        <dbReference type="ChEBI" id="CHEBI:58885"/>
    </ligand>
</feature>
<feature type="binding site" evidence="1">
    <location>
        <position position="366"/>
    </location>
    <ligand>
        <name>UDP-alpha-D-glucose</name>
        <dbReference type="ChEBI" id="CHEBI:58885"/>
    </ligand>
</feature>
<feature type="binding site" evidence="2">
    <location>
        <position position="381"/>
    </location>
    <ligand>
        <name>an anthocyanidin</name>
        <dbReference type="ChEBI" id="CHEBI:143576"/>
    </ligand>
</feature>
<feature type="binding site" evidence="1">
    <location>
        <position position="382"/>
    </location>
    <ligand>
        <name>UDP-alpha-D-glucose</name>
        <dbReference type="ChEBI" id="CHEBI:58885"/>
    </ligand>
</feature>
<feature type="binding site" evidence="1">
    <location>
        <position position="383"/>
    </location>
    <ligand>
        <name>UDP-alpha-D-glucose</name>
        <dbReference type="ChEBI" id="CHEBI:58885"/>
    </ligand>
</feature>
<reference key="1">
    <citation type="journal article" date="2014" name="Plant J.">
        <title>Purification, molecular cloning and functional characterization of flavonoid C-glucosyltransferases from Fagopyrum esculentum M. (buckwheat) cotyledon.</title>
        <authorList>
            <person name="Nagatomo Y."/>
            <person name="Usui S."/>
            <person name="Ito T."/>
            <person name="Kato A."/>
            <person name="Shimosaka M."/>
            <person name="Taguchi G."/>
        </authorList>
    </citation>
    <scope>NUCLEOTIDE SEQUENCE [MRNA]</scope>
    <scope>PROTEIN SEQUENCE OF 93-103; 197-213; 257-270; 322-330; 393-413; 416-424 AND 440-456</scope>
    <scope>FUNCTION</scope>
    <scope>CATALYTIC ACTIVITY</scope>
    <scope>BIOPHYSICOCHEMICAL PROPERTIES</scope>
    <scope>TISSUE SPECIFICITY</scope>
    <scope>DEVELOPMENTAL STAGE</scope>
</reference>
<organism evidence="6">
    <name type="scientific">Fagopyrum esculentum</name>
    <name type="common">Common buckwheat</name>
    <name type="synonym">Polygonum fagopyrum</name>
    <dbReference type="NCBI Taxonomy" id="3617"/>
    <lineage>
        <taxon>Eukaryota</taxon>
        <taxon>Viridiplantae</taxon>
        <taxon>Streptophyta</taxon>
        <taxon>Embryophyta</taxon>
        <taxon>Tracheophyta</taxon>
        <taxon>Spermatophyta</taxon>
        <taxon>Magnoliopsida</taxon>
        <taxon>eudicotyledons</taxon>
        <taxon>Gunneridae</taxon>
        <taxon>Pentapetalae</taxon>
        <taxon>Caryophyllales</taxon>
        <taxon>Polygonaceae</taxon>
        <taxon>Polygonoideae</taxon>
        <taxon>Fagopyreae</taxon>
        <taxon>Fagopyrum</taxon>
    </lineage>
</organism>
<name>708C2_FAGES</name>
<comment type="function">
    <text evidence="3">UDP-glucose-dependent glucosyltransferase catalyzing the c-glucosylation of 2-hydroxyflavanones (2-hydroxynaringenin, 2-hydroxyeriodictyol and 2-hydroxypinocembrin) and phloretin. No activity with flavanones, flavones or flavonols.</text>
</comment>
<comment type="catalytic activity">
    <reaction evidence="3">
        <text>a 3'-hydro-2'-hydroxy-beta-oxodihydrochalcone + UDP-alpha-D-glucose = a 3'-(beta-D-glucopyranosyl)-2'-hydroxy-beta-oxodihydrochalcone + UDP + H(+)</text>
        <dbReference type="Rhea" id="RHEA:51504"/>
        <dbReference type="ChEBI" id="CHEBI:15378"/>
        <dbReference type="ChEBI" id="CHEBI:58223"/>
        <dbReference type="ChEBI" id="CHEBI:58885"/>
        <dbReference type="ChEBI" id="CHEBI:142482"/>
        <dbReference type="ChEBI" id="CHEBI:142483"/>
        <dbReference type="EC" id="2.4.1.360"/>
    </reaction>
    <physiologicalReaction direction="left-to-right" evidence="3">
        <dbReference type="Rhea" id="RHEA:51505"/>
    </physiologicalReaction>
</comment>
<comment type="biophysicochemical properties">
    <kinetics>
        <KM evidence="3">3.7 uM for 2-hydroxynaringenin</KM>
        <KM evidence="3">6.5 uM for 2-hydroxypinocembrin</KM>
        <KM evidence="3">38.5 uM for 2-phenyl-2',4',6'-trihydroxyactophenone</KM>
        <KM evidence="3">36 uM for UDP-glucose with 2-hydroxypinocembrin as acceptor</KM>
    </kinetics>
    <phDependence>
        <text evidence="3">Optimum pH is 6.5-7.0.</text>
    </phDependence>
    <temperatureDependence>
        <text evidence="3">Optimum temperature is 50-55 degrees Celsius.</text>
    </temperatureDependence>
</comment>
<comment type="tissue specificity">
    <text evidence="3">Expressed in cotyledons. Not detected in flowers, leaves, roots and hypocotyls.</text>
</comment>
<comment type="developmental stage">
    <text evidence="3">Expressed in germinating seeds and during cotyledon development.</text>
</comment>
<comment type="similarity">
    <text evidence="5">Belongs to the UDP-glycosyltransferase family.</text>
</comment>